<sequence length="521" mass="56546">MSGETEIDDPEVSDGASENDYSDHEQELDVVGKEDDNQEMAEQKVRPDGDENGNTVGAAATATKPKFDPKDPLRPRRKKARRACFACQRAHLTCGDERPCQRCIKRGLADACQDGVRKKAKYLHDAPPEALRPVLGPTYNQQVSNNRATAASTPTEPSTGMGNFFTQPDTSPSYPLFAANQQGQMPPPLQNRLSFGSNQPSPISPTFHTVGNRPAGMQGISLPQVSNDSHAAFGGGAFFDPSNPALFNFDLEGLNFGNHYGALEFGMLGHMASGSAETPPQDSSAGMPQNVGDLGYNNNPAFNNNPPFNQIYSHDALPDFAVAPPGAHRPAKRQDTKSGPSGKLGPSSALGKRNRDPSSIYDTVHEPYSYTTGFHSLTAFIQKRFSPNKTLRIAKSLASIRPSFISCTKTLNRQDLVFMEKCFQRTLFEYEDFMLNCCTPTLVCRRTGEIAAVNKEFTLLTGWRKEVLLGNEPNLNINTGNSGASSSGSSGRGSFTTPRMRPINLVDSNTASLNSTKILQD</sequence>
<comment type="function">
    <text evidence="1">Transcription factor which regulates nonfermentable carbon utilization. Activator of gluconeogenetic genes (By similarity).</text>
</comment>
<comment type="subcellular location">
    <subcellularLocation>
        <location evidence="2">Nucleus</location>
    </subcellularLocation>
</comment>
<comment type="similarity">
    <text evidence="4">Belongs to the ERT1/acuK family.</text>
</comment>
<dbReference type="EMBL" id="CH476623">
    <property type="protein sequence ID" value="EDN99439.1"/>
    <property type="molecule type" value="Genomic_DNA"/>
</dbReference>
<dbReference type="RefSeq" id="XP_001596077.1">
    <property type="nucleotide sequence ID" value="XM_001596027.1"/>
</dbReference>
<dbReference type="SMR" id="A7EAG1"/>
<dbReference type="FunCoup" id="A7EAG1">
    <property type="interactions" value="196"/>
</dbReference>
<dbReference type="EnsemblFungi" id="EDN99439">
    <property type="protein sequence ID" value="EDN99439"/>
    <property type="gene ID" value="SS1G_02293"/>
</dbReference>
<dbReference type="GeneID" id="5492583"/>
<dbReference type="KEGG" id="ssl:SS1G_02293"/>
<dbReference type="eggNOG" id="ENOG502R1M5">
    <property type="taxonomic scope" value="Eukaryota"/>
</dbReference>
<dbReference type="HOGENOM" id="CLU_010748_1_0_1"/>
<dbReference type="InParanoid" id="A7EAG1"/>
<dbReference type="OMA" id="VMTTCKL"/>
<dbReference type="Proteomes" id="UP000001312">
    <property type="component" value="Unassembled WGS sequence"/>
</dbReference>
<dbReference type="GO" id="GO:0005634">
    <property type="term" value="C:nucleus"/>
    <property type="evidence" value="ECO:0000318"/>
    <property type="project" value="GO_Central"/>
</dbReference>
<dbReference type="GO" id="GO:0003700">
    <property type="term" value="F:DNA-binding transcription factor activity"/>
    <property type="evidence" value="ECO:0000318"/>
    <property type="project" value="GO_Central"/>
</dbReference>
<dbReference type="GO" id="GO:0000981">
    <property type="term" value="F:DNA-binding transcription factor activity, RNA polymerase II-specific"/>
    <property type="evidence" value="ECO:0007669"/>
    <property type="project" value="InterPro"/>
</dbReference>
<dbReference type="GO" id="GO:0000977">
    <property type="term" value="F:RNA polymerase II transcription regulatory region sequence-specific DNA binding"/>
    <property type="evidence" value="ECO:0000318"/>
    <property type="project" value="GO_Central"/>
</dbReference>
<dbReference type="GO" id="GO:0008270">
    <property type="term" value="F:zinc ion binding"/>
    <property type="evidence" value="ECO:0007669"/>
    <property type="project" value="InterPro"/>
</dbReference>
<dbReference type="GO" id="GO:0009267">
    <property type="term" value="P:cellular response to starvation"/>
    <property type="evidence" value="ECO:0000318"/>
    <property type="project" value="GO_Central"/>
</dbReference>
<dbReference type="GO" id="GO:0006094">
    <property type="term" value="P:gluconeogenesis"/>
    <property type="evidence" value="ECO:0007669"/>
    <property type="project" value="UniProtKB-KW"/>
</dbReference>
<dbReference type="CDD" id="cd00067">
    <property type="entry name" value="GAL4"/>
    <property type="match status" value="1"/>
</dbReference>
<dbReference type="Gene3D" id="4.10.240.10">
    <property type="entry name" value="Zn(2)-C6 fungal-type DNA-binding domain"/>
    <property type="match status" value="1"/>
</dbReference>
<dbReference type="InterPro" id="IPR050335">
    <property type="entry name" value="ERT1_acuK_gluconeogen_tf"/>
</dbReference>
<dbReference type="InterPro" id="IPR056751">
    <property type="entry name" value="PAS_13"/>
</dbReference>
<dbReference type="InterPro" id="IPR036864">
    <property type="entry name" value="Zn2-C6_fun-type_DNA-bd_sf"/>
</dbReference>
<dbReference type="InterPro" id="IPR001138">
    <property type="entry name" value="Zn2Cys6_DnaBD"/>
</dbReference>
<dbReference type="PANTHER" id="PTHR47659:SF1">
    <property type="entry name" value="TRANSCRIPTION ACTIVATOR OF GLUCONEOGENESIS ERT1"/>
    <property type="match status" value="1"/>
</dbReference>
<dbReference type="PANTHER" id="PTHR47659">
    <property type="entry name" value="ZN(II)2CYS6 TRANSCRIPTION FACTOR (EUROFUNG)-RELATED"/>
    <property type="match status" value="1"/>
</dbReference>
<dbReference type="Pfam" id="PF24990">
    <property type="entry name" value="PAS_13"/>
    <property type="match status" value="1"/>
</dbReference>
<dbReference type="SMART" id="SM00066">
    <property type="entry name" value="GAL4"/>
    <property type="match status" value="1"/>
</dbReference>
<dbReference type="SUPFAM" id="SSF57701">
    <property type="entry name" value="Zn2/Cys6 DNA-binding domain"/>
    <property type="match status" value="1"/>
</dbReference>
<dbReference type="PROSITE" id="PS50048">
    <property type="entry name" value="ZN2_CY6_FUNGAL_2"/>
    <property type="match status" value="1"/>
</dbReference>
<evidence type="ECO:0000250" key="1"/>
<evidence type="ECO:0000255" key="2">
    <source>
        <dbReference type="PROSITE-ProRule" id="PRU00227"/>
    </source>
</evidence>
<evidence type="ECO:0000256" key="3">
    <source>
        <dbReference type="SAM" id="MobiDB-lite"/>
    </source>
</evidence>
<evidence type="ECO:0000305" key="4"/>
<name>ACUK_SCLS1</name>
<organism>
    <name type="scientific">Sclerotinia sclerotiorum (strain ATCC 18683 / 1980 / Ss-1)</name>
    <name type="common">White mold</name>
    <name type="synonym">Whetzelinia sclerotiorum</name>
    <dbReference type="NCBI Taxonomy" id="665079"/>
    <lineage>
        <taxon>Eukaryota</taxon>
        <taxon>Fungi</taxon>
        <taxon>Dikarya</taxon>
        <taxon>Ascomycota</taxon>
        <taxon>Pezizomycotina</taxon>
        <taxon>Leotiomycetes</taxon>
        <taxon>Helotiales</taxon>
        <taxon>Sclerotiniaceae</taxon>
        <taxon>Sclerotinia</taxon>
    </lineage>
</organism>
<accession>A7EAG1</accession>
<proteinExistence type="inferred from homology"/>
<protein>
    <recommendedName>
        <fullName>Transcription activator of gluconeogenesis SS1G_02293</fullName>
    </recommendedName>
</protein>
<gene>
    <name type="ORF">SS1G_02293</name>
</gene>
<keyword id="KW-0010">Activator</keyword>
<keyword id="KW-0238">DNA-binding</keyword>
<keyword id="KW-0312">Gluconeogenesis</keyword>
<keyword id="KW-0479">Metal-binding</keyword>
<keyword id="KW-0539">Nucleus</keyword>
<keyword id="KW-1185">Reference proteome</keyword>
<keyword id="KW-0804">Transcription</keyword>
<keyword id="KW-0805">Transcription regulation</keyword>
<keyword id="KW-0862">Zinc</keyword>
<reference key="1">
    <citation type="journal article" date="2011" name="PLoS Genet.">
        <title>Genomic analysis of the necrotrophic fungal pathogens Sclerotinia sclerotiorum and Botrytis cinerea.</title>
        <authorList>
            <person name="Amselem J."/>
            <person name="Cuomo C.A."/>
            <person name="van Kan J.A.L."/>
            <person name="Viaud M."/>
            <person name="Benito E.P."/>
            <person name="Couloux A."/>
            <person name="Coutinho P.M."/>
            <person name="de Vries R.P."/>
            <person name="Dyer P.S."/>
            <person name="Fillinger S."/>
            <person name="Fournier E."/>
            <person name="Gout L."/>
            <person name="Hahn M."/>
            <person name="Kohn L."/>
            <person name="Lapalu N."/>
            <person name="Plummer K.M."/>
            <person name="Pradier J.-M."/>
            <person name="Quevillon E."/>
            <person name="Sharon A."/>
            <person name="Simon A."/>
            <person name="ten Have A."/>
            <person name="Tudzynski B."/>
            <person name="Tudzynski P."/>
            <person name="Wincker P."/>
            <person name="Andrew M."/>
            <person name="Anthouard V."/>
            <person name="Beever R.E."/>
            <person name="Beffa R."/>
            <person name="Benoit I."/>
            <person name="Bouzid O."/>
            <person name="Brault B."/>
            <person name="Chen Z."/>
            <person name="Choquer M."/>
            <person name="Collemare J."/>
            <person name="Cotton P."/>
            <person name="Danchin E.G."/>
            <person name="Da Silva C."/>
            <person name="Gautier A."/>
            <person name="Giraud C."/>
            <person name="Giraud T."/>
            <person name="Gonzalez C."/>
            <person name="Grossetete S."/>
            <person name="Gueldener U."/>
            <person name="Henrissat B."/>
            <person name="Howlett B.J."/>
            <person name="Kodira C."/>
            <person name="Kretschmer M."/>
            <person name="Lappartient A."/>
            <person name="Leroch M."/>
            <person name="Levis C."/>
            <person name="Mauceli E."/>
            <person name="Neuveglise C."/>
            <person name="Oeser B."/>
            <person name="Pearson M."/>
            <person name="Poulain J."/>
            <person name="Poussereau N."/>
            <person name="Quesneville H."/>
            <person name="Rascle C."/>
            <person name="Schumacher J."/>
            <person name="Segurens B."/>
            <person name="Sexton A."/>
            <person name="Silva E."/>
            <person name="Sirven C."/>
            <person name="Soanes D.M."/>
            <person name="Talbot N.J."/>
            <person name="Templeton M."/>
            <person name="Yandava C."/>
            <person name="Yarden O."/>
            <person name="Zeng Q."/>
            <person name="Rollins J.A."/>
            <person name="Lebrun M.-H."/>
            <person name="Dickman M."/>
        </authorList>
    </citation>
    <scope>NUCLEOTIDE SEQUENCE [LARGE SCALE GENOMIC DNA]</scope>
    <source>
        <strain>ATCC 18683 / 1980 / Ss-1</strain>
    </source>
</reference>
<feature type="chain" id="PRO_0000406451" description="Transcription activator of gluconeogenesis SS1G_02293">
    <location>
        <begin position="1"/>
        <end position="521"/>
    </location>
</feature>
<feature type="domain" description="PAS">
    <location>
        <begin position="426"/>
        <end position="497"/>
    </location>
</feature>
<feature type="DNA-binding region" description="Zn(2)-C6 fungal-type" evidence="2">
    <location>
        <begin position="84"/>
        <end position="112"/>
    </location>
</feature>
<feature type="region of interest" description="Disordered" evidence="3">
    <location>
        <begin position="1"/>
        <end position="75"/>
    </location>
</feature>
<feature type="region of interest" description="Disordered" evidence="3">
    <location>
        <begin position="273"/>
        <end position="308"/>
    </location>
</feature>
<feature type="region of interest" description="Disordered" evidence="3">
    <location>
        <begin position="322"/>
        <end position="358"/>
    </location>
</feature>
<feature type="region of interest" description="Disordered" evidence="3">
    <location>
        <begin position="478"/>
        <end position="501"/>
    </location>
</feature>
<feature type="compositionally biased region" description="Acidic residues" evidence="3">
    <location>
        <begin position="1"/>
        <end position="12"/>
    </location>
</feature>
<feature type="compositionally biased region" description="Basic and acidic residues" evidence="3">
    <location>
        <begin position="21"/>
        <end position="49"/>
    </location>
</feature>
<feature type="compositionally biased region" description="Basic and acidic residues" evidence="3">
    <location>
        <begin position="65"/>
        <end position="74"/>
    </location>
</feature>
<feature type="compositionally biased region" description="Polar residues" evidence="3">
    <location>
        <begin position="275"/>
        <end position="287"/>
    </location>
</feature>
<feature type="compositionally biased region" description="Low complexity" evidence="3">
    <location>
        <begin position="297"/>
        <end position="308"/>
    </location>
</feature>
<feature type="compositionally biased region" description="Low complexity" evidence="3">
    <location>
        <begin position="337"/>
        <end position="351"/>
    </location>
</feature>
<feature type="compositionally biased region" description="Low complexity" evidence="3">
    <location>
        <begin position="480"/>
        <end position="494"/>
    </location>
</feature>